<proteinExistence type="inferred from homology"/>
<gene>
    <name evidence="1" type="primary">fni</name>
    <name type="ordered locus">Mthe_0474</name>
</gene>
<protein>
    <recommendedName>
        <fullName evidence="1">Isopentenyl-diphosphate delta-isomerase</fullName>
        <shortName evidence="1">IPP isomerase</shortName>
        <ecNumber evidence="1">5.3.3.2</ecNumber>
    </recommendedName>
    <alternativeName>
        <fullName evidence="1">Isopentenyl diphosphate:dimethylallyl diphosphate isomerase</fullName>
    </alternativeName>
    <alternativeName>
        <fullName evidence="1">Isopentenyl pyrophosphate isomerase</fullName>
    </alternativeName>
    <alternativeName>
        <fullName evidence="1">Type 2 isopentenyl diphosphate isomerase</fullName>
        <shortName evidence="1">IDI-2</shortName>
    </alternativeName>
</protein>
<keyword id="KW-0963">Cytoplasm</keyword>
<keyword id="KW-0285">Flavoprotein</keyword>
<keyword id="KW-0288">FMN</keyword>
<keyword id="KW-0413">Isomerase</keyword>
<keyword id="KW-0414">Isoprene biosynthesis</keyword>
<keyword id="KW-0460">Magnesium</keyword>
<keyword id="KW-0479">Metal-binding</keyword>
<keyword id="KW-0521">NADP</keyword>
<keyword id="KW-1185">Reference proteome</keyword>
<comment type="function">
    <text evidence="1">Involved in the biosynthesis of isoprenoids. Catalyzes the 1,3-allylic rearrangement of the homoallylic substrate isopentenyl (IPP) to its allylic isomer, dimethylallyl diphosphate (DMAPP).</text>
</comment>
<comment type="catalytic activity">
    <reaction evidence="1">
        <text>isopentenyl diphosphate = dimethylallyl diphosphate</text>
        <dbReference type="Rhea" id="RHEA:23284"/>
        <dbReference type="ChEBI" id="CHEBI:57623"/>
        <dbReference type="ChEBI" id="CHEBI:128769"/>
        <dbReference type="EC" id="5.3.3.2"/>
    </reaction>
</comment>
<comment type="cofactor">
    <cofactor evidence="1">
        <name>FMN</name>
        <dbReference type="ChEBI" id="CHEBI:58210"/>
    </cofactor>
</comment>
<comment type="cofactor">
    <cofactor evidence="1">
        <name>NADPH</name>
        <dbReference type="ChEBI" id="CHEBI:57783"/>
    </cofactor>
</comment>
<comment type="cofactor">
    <cofactor evidence="1">
        <name>Mg(2+)</name>
        <dbReference type="ChEBI" id="CHEBI:18420"/>
    </cofactor>
</comment>
<comment type="subunit">
    <text evidence="1">Homooctamer. Dimer of tetramers.</text>
</comment>
<comment type="subcellular location">
    <subcellularLocation>
        <location evidence="1">Cytoplasm</location>
    </subcellularLocation>
</comment>
<comment type="similarity">
    <text evidence="1">Belongs to the IPP isomerase type 2 family.</text>
</comment>
<sequence>METVRRKLEHIEICLKKEVVSKYRPFDDLILLHRALPEIDESDVCTECTFLNRRLSAPLIISAMTGGHPDAREINANLATAAQETGIAIGVGSQRAALEHPDLEDTFSVVRELAPDVPVIGNIGAVQLHRYGPEVLDRVAEMVDADAVAVHLNFLQESVQPEGERHAAGVLGSLREARFRLPIIIKETGCGIPFEDARMLVDSGIQLIDVAGTGGTSWSMVESYRAELRGDPESKEIGMLFAEWGIPTPVSVIECSRAGAQVISSGGVRSGIDVARSIALGAFMAGAALPLLAPATRGSVDVVRVLQRFVRELRISMFLTGSRSLQELSRAPVIITGRTREILEQRGIDTKIFSSKR</sequence>
<dbReference type="EC" id="5.3.3.2" evidence="1"/>
<dbReference type="EMBL" id="CP000477">
    <property type="protein sequence ID" value="ABK14265.1"/>
    <property type="molecule type" value="Genomic_DNA"/>
</dbReference>
<dbReference type="RefSeq" id="WP_011695663.1">
    <property type="nucleotide sequence ID" value="NC_008553.1"/>
</dbReference>
<dbReference type="SMR" id="A0B6E1"/>
<dbReference type="STRING" id="349307.Mthe_0474"/>
<dbReference type="GeneID" id="4463091"/>
<dbReference type="KEGG" id="mtp:Mthe_0474"/>
<dbReference type="HOGENOM" id="CLU_065515_1_0_2"/>
<dbReference type="OrthoDB" id="371955at2157"/>
<dbReference type="Proteomes" id="UP000000674">
    <property type="component" value="Chromosome"/>
</dbReference>
<dbReference type="GO" id="GO:0005737">
    <property type="term" value="C:cytoplasm"/>
    <property type="evidence" value="ECO:0007669"/>
    <property type="project" value="UniProtKB-SubCell"/>
</dbReference>
<dbReference type="GO" id="GO:0010181">
    <property type="term" value="F:FMN binding"/>
    <property type="evidence" value="ECO:0007669"/>
    <property type="project" value="UniProtKB-UniRule"/>
</dbReference>
<dbReference type="GO" id="GO:0004452">
    <property type="term" value="F:isopentenyl-diphosphate delta-isomerase activity"/>
    <property type="evidence" value="ECO:0007669"/>
    <property type="project" value="UniProtKB-UniRule"/>
</dbReference>
<dbReference type="GO" id="GO:0000287">
    <property type="term" value="F:magnesium ion binding"/>
    <property type="evidence" value="ECO:0007669"/>
    <property type="project" value="UniProtKB-UniRule"/>
</dbReference>
<dbReference type="GO" id="GO:0070402">
    <property type="term" value="F:NADPH binding"/>
    <property type="evidence" value="ECO:0007669"/>
    <property type="project" value="UniProtKB-UniRule"/>
</dbReference>
<dbReference type="GO" id="GO:0016491">
    <property type="term" value="F:oxidoreductase activity"/>
    <property type="evidence" value="ECO:0007669"/>
    <property type="project" value="InterPro"/>
</dbReference>
<dbReference type="GO" id="GO:0008299">
    <property type="term" value="P:isoprenoid biosynthetic process"/>
    <property type="evidence" value="ECO:0007669"/>
    <property type="project" value="UniProtKB-UniRule"/>
</dbReference>
<dbReference type="CDD" id="cd02811">
    <property type="entry name" value="IDI-2_FMN"/>
    <property type="match status" value="1"/>
</dbReference>
<dbReference type="Gene3D" id="3.20.20.70">
    <property type="entry name" value="Aldolase class I"/>
    <property type="match status" value="1"/>
</dbReference>
<dbReference type="HAMAP" id="MF_00354">
    <property type="entry name" value="Idi_2"/>
    <property type="match status" value="1"/>
</dbReference>
<dbReference type="InterPro" id="IPR013785">
    <property type="entry name" value="Aldolase_TIM"/>
</dbReference>
<dbReference type="InterPro" id="IPR000262">
    <property type="entry name" value="FMN-dep_DH"/>
</dbReference>
<dbReference type="InterPro" id="IPR011179">
    <property type="entry name" value="IPdP_isomerase"/>
</dbReference>
<dbReference type="NCBIfam" id="TIGR02151">
    <property type="entry name" value="IPP_isom_2"/>
    <property type="match status" value="1"/>
</dbReference>
<dbReference type="PANTHER" id="PTHR43665">
    <property type="entry name" value="ISOPENTENYL-DIPHOSPHATE DELTA-ISOMERASE"/>
    <property type="match status" value="1"/>
</dbReference>
<dbReference type="PANTHER" id="PTHR43665:SF1">
    <property type="entry name" value="ISOPENTENYL-DIPHOSPHATE DELTA-ISOMERASE"/>
    <property type="match status" value="1"/>
</dbReference>
<dbReference type="Pfam" id="PF01070">
    <property type="entry name" value="FMN_dh"/>
    <property type="match status" value="1"/>
</dbReference>
<dbReference type="PIRSF" id="PIRSF003314">
    <property type="entry name" value="IPP_isomerase"/>
    <property type="match status" value="1"/>
</dbReference>
<dbReference type="SMART" id="SM01240">
    <property type="entry name" value="IMPDH"/>
    <property type="match status" value="1"/>
</dbReference>
<dbReference type="SUPFAM" id="SSF51395">
    <property type="entry name" value="FMN-linked oxidoreductases"/>
    <property type="match status" value="1"/>
</dbReference>
<reference key="1">
    <citation type="submission" date="2006-10" db="EMBL/GenBank/DDBJ databases">
        <title>Complete sequence of Methanosaeta thermophila PT.</title>
        <authorList>
            <consortium name="US DOE Joint Genome Institute"/>
            <person name="Copeland A."/>
            <person name="Lucas S."/>
            <person name="Lapidus A."/>
            <person name="Barry K."/>
            <person name="Detter J.C."/>
            <person name="Glavina del Rio T."/>
            <person name="Hammon N."/>
            <person name="Israni S."/>
            <person name="Pitluck S."/>
            <person name="Chain P."/>
            <person name="Malfatti S."/>
            <person name="Shin M."/>
            <person name="Vergez L."/>
            <person name="Schmutz J."/>
            <person name="Larimer F."/>
            <person name="Land M."/>
            <person name="Hauser L."/>
            <person name="Kyrpides N."/>
            <person name="Kim E."/>
            <person name="Smith K.S."/>
            <person name="Ingram-Smith C."/>
            <person name="Richardson P."/>
        </authorList>
    </citation>
    <scope>NUCLEOTIDE SEQUENCE [LARGE SCALE GENOMIC DNA]</scope>
    <source>
        <strain>DSM 6194 / JCM 14653 / NBRC 101360 / PT</strain>
    </source>
</reference>
<name>IDI2_METTP</name>
<accession>A0B6E1</accession>
<evidence type="ECO:0000255" key="1">
    <source>
        <dbReference type="HAMAP-Rule" id="MF_00354"/>
    </source>
</evidence>
<organism>
    <name type="scientific">Methanothrix thermoacetophila (strain DSM 6194 / JCM 14653 / NBRC 101360 / PT)</name>
    <name type="common">Methanosaeta thermophila</name>
    <dbReference type="NCBI Taxonomy" id="349307"/>
    <lineage>
        <taxon>Archaea</taxon>
        <taxon>Methanobacteriati</taxon>
        <taxon>Methanobacteriota</taxon>
        <taxon>Stenosarchaea group</taxon>
        <taxon>Methanomicrobia</taxon>
        <taxon>Methanotrichales</taxon>
        <taxon>Methanotrichaceae</taxon>
        <taxon>Methanothrix</taxon>
    </lineage>
</organism>
<feature type="chain" id="PRO_1000048448" description="Isopentenyl-diphosphate delta-isomerase">
    <location>
        <begin position="1"/>
        <end position="357"/>
    </location>
</feature>
<feature type="binding site" evidence="1">
    <location>
        <begin position="6"/>
        <end position="7"/>
    </location>
    <ligand>
        <name>substrate</name>
    </ligand>
</feature>
<feature type="binding site" evidence="1">
    <location>
        <position position="62"/>
    </location>
    <ligand>
        <name>FMN</name>
        <dbReference type="ChEBI" id="CHEBI:58210"/>
    </ligand>
</feature>
<feature type="binding site" evidence="1">
    <location>
        <begin position="63"/>
        <end position="65"/>
    </location>
    <ligand>
        <name>FMN</name>
        <dbReference type="ChEBI" id="CHEBI:58210"/>
    </ligand>
</feature>
<feature type="binding site" evidence="1">
    <location>
        <begin position="93"/>
        <end position="95"/>
    </location>
    <ligand>
        <name>substrate</name>
    </ligand>
</feature>
<feature type="binding site" evidence="1">
    <location>
        <position position="93"/>
    </location>
    <ligand>
        <name>FMN</name>
        <dbReference type="ChEBI" id="CHEBI:58210"/>
    </ligand>
</feature>
<feature type="binding site" evidence="1">
    <location>
        <position position="122"/>
    </location>
    <ligand>
        <name>FMN</name>
        <dbReference type="ChEBI" id="CHEBI:58210"/>
    </ligand>
</feature>
<feature type="binding site" evidence="1">
    <location>
        <position position="156"/>
    </location>
    <ligand>
        <name>substrate</name>
    </ligand>
</feature>
<feature type="binding site" evidence="1">
    <location>
        <position position="157"/>
    </location>
    <ligand>
        <name>Mg(2+)</name>
        <dbReference type="ChEBI" id="CHEBI:18420"/>
    </ligand>
</feature>
<feature type="binding site" evidence="1">
    <location>
        <position position="186"/>
    </location>
    <ligand>
        <name>FMN</name>
        <dbReference type="ChEBI" id="CHEBI:58210"/>
    </ligand>
</feature>
<feature type="binding site" evidence="1">
    <location>
        <position position="216"/>
    </location>
    <ligand>
        <name>FMN</name>
        <dbReference type="ChEBI" id="CHEBI:58210"/>
    </ligand>
</feature>
<feature type="binding site" evidence="1">
    <location>
        <begin position="267"/>
        <end position="269"/>
    </location>
    <ligand>
        <name>FMN</name>
        <dbReference type="ChEBI" id="CHEBI:58210"/>
    </ligand>
</feature>
<feature type="binding site" evidence="1">
    <location>
        <begin position="288"/>
        <end position="289"/>
    </location>
    <ligand>
        <name>FMN</name>
        <dbReference type="ChEBI" id="CHEBI:58210"/>
    </ligand>
</feature>